<proteinExistence type="evidence at protein level"/>
<sequence>MAAKLARLHSLRERLGATFSSHPNELIALFSRYVNQGKGMLQRHQLLAEFDALIEADKEKYAPFEDILRAAQEAIVLPPWVALAIRPRPGVWDYIRVNVSELAVEELSVSEYLAFKEQLVDGHTNSNFVLELDFEPFNASFPRPSMSKSIGNGVQFLNRHLSSKLFQDKESLYPLLNFLKAHNHKGTTMMLNDRIQSLRGLQSSLRKAEEYLMGIPQDTPYSEFNHRFQELGLEKGWGDCAKRVLDTIHLLLDLLEAPDPANLEKFLGTIPMMFNVVILSPHGYFAQSNVLGYPDTGGQVVYILDQVRALENEMLLRIKQQGLDITPKILIVTRLLPDAVGTTCGQRVEKVIGTEHTDILRVPFRSENGILRKWISRFDVWPFLETYTEDVANEIMREMQAKPDLIIGNYSDGNLVATLLAHKLGVTQCTIAHALEKTKYPNSDIYLDKFDSQYHFSCQFTADLIAMNHTDFIITSTFQEIAGSKDTVGQYESHIAFTLPGLYRVVHGIDVFDPKFNIVSPGADMSVYFPYTEADKRLTAFHPEIEELLYSEVENDEHKFVLKDKNKPIIFSMARLDRVKNMTGLVEMYGKNAHLRDLANLVIVCGDHGNQSKDREEQAEFKKMYGLIDQYKLKGHIRWISAQMNRVRNGELYRYICDTKGVFVQPAFYEAFGLTVIEAMTCGLPTIATCHGGPAEIIVDGVSGLHIDPYHSDKAADILVNFFEKCKQDSTYWDNISQGGLQRIYEKYTWKLYSERLMTLTGVYGFWKYVSNLERRETRRYIEMFYALKYRSLASAVPLAVDGESTSK</sequence>
<feature type="chain" id="PRO_0000204655" description="Sucrose synthase 2">
    <location>
        <begin position="1"/>
        <end position="808"/>
    </location>
</feature>
<feature type="region of interest" description="GT-B glycosyltransferase" evidence="1">
    <location>
        <begin position="272"/>
        <end position="749"/>
    </location>
</feature>
<feature type="modified residue" description="Phosphoserine; by CPK" evidence="3">
    <location>
        <position position="10"/>
    </location>
</feature>
<feature type="mutagenesis site" description="Loss of phosphorylation.">
    <original>S</original>
    <variation>V</variation>
    <location>
        <position position="10"/>
    </location>
</feature>
<feature type="sequence conflict" description="In Ref. 4; ABL74568." evidence="9" ref="4">
    <original>F</original>
    <variation>L</variation>
    <location>
        <position position="128"/>
    </location>
</feature>
<feature type="sequence conflict" description="In Ref. 3; CAA78747." evidence="9" ref="3">
    <original>L</original>
    <variation>P</variation>
    <location>
        <position position="191"/>
    </location>
</feature>
<feature type="sequence conflict" description="In Ref. 5; AEX32875." evidence="9" ref="5">
    <original>D</original>
    <variation>G</variation>
    <location>
        <position position="577"/>
    </location>
</feature>
<feature type="sequence conflict" description="In Ref. 5; AEX32875." evidence="9" ref="5">
    <original>NGEL</original>
    <variation>TGEM</variation>
    <location>
        <begin position="649"/>
        <end position="652"/>
    </location>
</feature>
<keyword id="KW-0328">Glycosyltransferase</keyword>
<keyword id="KW-0597">Phosphoprotein</keyword>
<keyword id="KW-1185">Reference proteome</keyword>
<keyword id="KW-0346">Stress response</keyword>
<keyword id="KW-0808">Transferase</keyword>
<name>SUS2_ORYSJ</name>
<comment type="function">
    <text evidence="1 3">Sucrose-cleaving enzyme that provides UDP-glucose and fructose for various metabolic pathways (By similarity). Functions in developing seeds by supplying substrates for the biosynthesis of storage products (PubMed:11910009).</text>
</comment>
<comment type="catalytic activity">
    <reaction>
        <text>an NDP-alpha-D-glucose + D-fructose = a ribonucleoside 5'-diphosphate + sucrose + H(+)</text>
        <dbReference type="Rhea" id="RHEA:16241"/>
        <dbReference type="ChEBI" id="CHEBI:15378"/>
        <dbReference type="ChEBI" id="CHEBI:17992"/>
        <dbReference type="ChEBI" id="CHEBI:37721"/>
        <dbReference type="ChEBI" id="CHEBI:57930"/>
        <dbReference type="ChEBI" id="CHEBI:76533"/>
        <dbReference type="EC" id="2.4.1.13"/>
    </reaction>
</comment>
<comment type="activity regulation">
    <text evidence="3">Activated by phosphorylation at Ser-10 by CPK23.</text>
</comment>
<comment type="subunit">
    <text evidence="6">Homotetramer or heterotetramer with SUS1.</text>
</comment>
<comment type="tissue specificity">
    <text evidence="2 5">Predominantly expressed in the leaf tissues. Expressed in seeds, and at lower levels in roots. Expressed in leaf mesophyll and phloem (at protein level).</text>
</comment>
<comment type="developmental stage">
    <text evidence="2 4 5">Expressed early in seed development with a peak at 6 days after pollination (DAP) and then decreases slightly (at protein level). In the caryopse, slightly expressed during the pre-storage phase and was strongly expressed from the early to middle storage phase.</text>
</comment>
<comment type="induction">
    <text evidence="7 8">By anaerobic stress. Up-regulated by sucrose, fructose and glucose and by sugar starvation. By submergence.</text>
</comment>
<comment type="PTM">
    <text evidence="3">Phosphorylated at Ser-10 by CPK23 in developing seeds.</text>
</comment>
<comment type="similarity">
    <text evidence="9">Belongs to the glycosyltransferase 1 family. Plant sucrose synthase subfamily.</text>
</comment>
<accession>P30298</accession>
<accession>A0A0P0WU51</accession>
<accession>A1YQI8</accession>
<accession>H6TFZ1</accession>
<accession>Q0DDW2</accession>
<accession>Q53X21</accession>
<accession>Q69V32</accession>
<protein>
    <recommendedName>
        <fullName>Sucrose synthase 2</fullName>
        <shortName>OsSUS2</shortName>
        <ecNumber>2.4.1.13</ecNumber>
    </recommendedName>
    <alternativeName>
        <fullName>Sucrose synthase 1</fullName>
        <shortName>RSs1</shortName>
    </alternativeName>
    <alternativeName>
        <fullName>Sucrose-UDP glucosyltransferase 2</fullName>
    </alternativeName>
</protein>
<gene>
    <name type="primary">SUS2</name>
    <name type="synonym">RSS1</name>
    <name type="synonym">RSUS2</name>
    <name type="ordered locus">Os06g0194900</name>
    <name type="ordered locus">LOC_Os06g09450</name>
    <name type="ORF">P0648E08.22</name>
</gene>
<evidence type="ECO:0000250" key="1"/>
<evidence type="ECO:0000269" key="2">
    <source>
    </source>
</evidence>
<evidence type="ECO:0000269" key="3">
    <source>
    </source>
</evidence>
<evidence type="ECO:0000269" key="4">
    <source>
    </source>
</evidence>
<evidence type="ECO:0000269" key="5">
    <source>
    </source>
</evidence>
<evidence type="ECO:0000269" key="6">
    <source>
    </source>
</evidence>
<evidence type="ECO:0000269" key="7">
    <source ref="13"/>
</evidence>
<evidence type="ECO:0000269" key="8">
    <source ref="15"/>
</evidence>
<evidence type="ECO:0000305" key="9"/>
<dbReference type="EC" id="2.4.1.13"/>
<dbReference type="EMBL" id="L39940">
    <property type="protein sequence ID" value="AAL31375.1"/>
    <property type="molecule type" value="Genomic_DNA"/>
</dbReference>
<dbReference type="EMBL" id="X64770">
    <property type="protein sequence ID" value="CAA46017.1"/>
    <property type="molecule type" value="Genomic_DNA"/>
</dbReference>
<dbReference type="EMBL" id="Z15028">
    <property type="protein sequence ID" value="CAA78747.1"/>
    <property type="molecule type" value="mRNA"/>
</dbReference>
<dbReference type="EMBL" id="EF122480">
    <property type="protein sequence ID" value="ABL74567.1"/>
    <property type="molecule type" value="mRNA"/>
</dbReference>
<dbReference type="EMBL" id="EF122481">
    <property type="protein sequence ID" value="ABL74568.1"/>
    <property type="molecule type" value="mRNA"/>
</dbReference>
<dbReference type="EMBL" id="HQ895720">
    <property type="protein sequence ID" value="AEX32875.1"/>
    <property type="molecule type" value="mRNA"/>
</dbReference>
<dbReference type="EMBL" id="AP004280">
    <property type="protein sequence ID" value="BAD35646.1"/>
    <property type="molecule type" value="Genomic_DNA"/>
</dbReference>
<dbReference type="EMBL" id="AP008212">
    <property type="protein sequence ID" value="BAF18961.1"/>
    <property type="molecule type" value="Genomic_DNA"/>
</dbReference>
<dbReference type="EMBL" id="AP014962">
    <property type="protein sequence ID" value="BAS96603.1"/>
    <property type="molecule type" value="Genomic_DNA"/>
</dbReference>
<dbReference type="EMBL" id="AK100546">
    <property type="protein sequence ID" value="BAG94649.1"/>
    <property type="molecule type" value="mRNA"/>
</dbReference>
<dbReference type="PIR" id="S23543">
    <property type="entry name" value="S23543"/>
</dbReference>
<dbReference type="RefSeq" id="XP_015643025.1">
    <property type="nucleotide sequence ID" value="XM_015787539.1"/>
</dbReference>
<dbReference type="RefSeq" id="XP_015643026.1">
    <property type="nucleotide sequence ID" value="XM_015787540.1"/>
</dbReference>
<dbReference type="RefSeq" id="XP_015643027.1">
    <property type="nucleotide sequence ID" value="XM_015787541.1"/>
</dbReference>
<dbReference type="SMR" id="P30298"/>
<dbReference type="FunCoup" id="P30298">
    <property type="interactions" value="160"/>
</dbReference>
<dbReference type="STRING" id="39947.P30298"/>
<dbReference type="CAZy" id="GT4">
    <property type="family name" value="Glycosyltransferase Family 4"/>
</dbReference>
<dbReference type="iPTMnet" id="P30298"/>
<dbReference type="PaxDb" id="39947-P30298"/>
<dbReference type="EnsemblPlants" id="Os06t0194900-01">
    <property type="protein sequence ID" value="Os06t0194900-01"/>
    <property type="gene ID" value="Os06g0194900"/>
</dbReference>
<dbReference type="EnsemblPlants" id="Os06t0194900-02">
    <property type="protein sequence ID" value="Os06t0194900-02"/>
    <property type="gene ID" value="Os06g0194900"/>
</dbReference>
<dbReference type="EnsemblPlants" id="Os06t0194900-03">
    <property type="protein sequence ID" value="Os06t0194900-03"/>
    <property type="gene ID" value="Os06g0194900"/>
</dbReference>
<dbReference type="Gramene" id="Os06t0194900-01">
    <property type="protein sequence ID" value="Os06t0194900-01"/>
    <property type="gene ID" value="Os06g0194900"/>
</dbReference>
<dbReference type="Gramene" id="Os06t0194900-02">
    <property type="protein sequence ID" value="Os06t0194900-02"/>
    <property type="gene ID" value="Os06g0194900"/>
</dbReference>
<dbReference type="Gramene" id="Os06t0194900-03">
    <property type="protein sequence ID" value="Os06t0194900-03"/>
    <property type="gene ID" value="Os06g0194900"/>
</dbReference>
<dbReference type="KEGG" id="dosa:Os06g0194900"/>
<dbReference type="eggNOG" id="KOG0853">
    <property type="taxonomic scope" value="Eukaryota"/>
</dbReference>
<dbReference type="InParanoid" id="P30298"/>
<dbReference type="OMA" id="LKAHNHK"/>
<dbReference type="OrthoDB" id="937291at2759"/>
<dbReference type="BRENDA" id="2.4.1.13">
    <property type="organism ID" value="4460"/>
</dbReference>
<dbReference type="PlantReactome" id="R-OSA-1119452">
    <property type="pathway name" value="Galactose degradation II"/>
</dbReference>
<dbReference type="PlantReactome" id="R-OSA-1119465">
    <property type="pathway name" value="Sucrose biosynthesis"/>
</dbReference>
<dbReference type="Proteomes" id="UP000000763">
    <property type="component" value="Chromosome 6"/>
</dbReference>
<dbReference type="Proteomes" id="UP000059680">
    <property type="component" value="Chromosome 6"/>
</dbReference>
<dbReference type="ExpressionAtlas" id="P30298">
    <property type="expression patterns" value="baseline and differential"/>
</dbReference>
<dbReference type="GO" id="GO:0016157">
    <property type="term" value="F:sucrose synthase activity"/>
    <property type="evidence" value="ECO:0000318"/>
    <property type="project" value="GO_Central"/>
</dbReference>
<dbReference type="GO" id="GO:0051262">
    <property type="term" value="P:protein tetramerization"/>
    <property type="evidence" value="ECO:0000353"/>
    <property type="project" value="UniProtKB"/>
</dbReference>
<dbReference type="GO" id="GO:0010431">
    <property type="term" value="P:seed maturation"/>
    <property type="evidence" value="ECO:0000315"/>
    <property type="project" value="UniProtKB"/>
</dbReference>
<dbReference type="GO" id="GO:0005985">
    <property type="term" value="P:sucrose metabolic process"/>
    <property type="evidence" value="ECO:0007669"/>
    <property type="project" value="InterPro"/>
</dbReference>
<dbReference type="FunFam" id="1.20.120.1230:FF:000001">
    <property type="entry name" value="Sucrose synthase"/>
    <property type="match status" value="1"/>
</dbReference>
<dbReference type="FunFam" id="3.10.450.330:FF:000001">
    <property type="entry name" value="Sucrose synthase"/>
    <property type="match status" value="1"/>
</dbReference>
<dbReference type="FunFam" id="3.40.50.2000:FF:000004">
    <property type="entry name" value="Sucrose synthase"/>
    <property type="match status" value="1"/>
</dbReference>
<dbReference type="Gene3D" id="1.20.120.1230">
    <property type="match status" value="1"/>
</dbReference>
<dbReference type="Gene3D" id="3.10.450.330">
    <property type="match status" value="1"/>
</dbReference>
<dbReference type="Gene3D" id="3.40.50.2000">
    <property type="entry name" value="Glycogen Phosphorylase B"/>
    <property type="match status" value="2"/>
</dbReference>
<dbReference type="InterPro" id="IPR001296">
    <property type="entry name" value="Glyco_trans_1"/>
</dbReference>
<dbReference type="InterPro" id="IPR000368">
    <property type="entry name" value="Sucrose_synth_GT-B1"/>
</dbReference>
<dbReference type="InterPro" id="IPR012820">
    <property type="entry name" value="Sucrose_synthase_pln/cyn"/>
</dbReference>
<dbReference type="InterPro" id="IPR056736">
    <property type="entry name" value="SUS_EPBD"/>
</dbReference>
<dbReference type="InterPro" id="IPR056735">
    <property type="entry name" value="SUS_N"/>
</dbReference>
<dbReference type="NCBIfam" id="TIGR02470">
    <property type="entry name" value="sucr_synth"/>
    <property type="match status" value="1"/>
</dbReference>
<dbReference type="PANTHER" id="PTHR45839">
    <property type="match status" value="1"/>
</dbReference>
<dbReference type="PANTHER" id="PTHR45839:SF7">
    <property type="entry name" value="SUCROSE SYNTHASE 1"/>
    <property type="match status" value="1"/>
</dbReference>
<dbReference type="Pfam" id="PF00534">
    <property type="entry name" value="Glycos_transf_1"/>
    <property type="match status" value="1"/>
</dbReference>
<dbReference type="Pfam" id="PF00862">
    <property type="entry name" value="GT-B_Sucrose_synth"/>
    <property type="match status" value="1"/>
</dbReference>
<dbReference type="Pfam" id="PF24862">
    <property type="entry name" value="SUS_EPBD"/>
    <property type="match status" value="1"/>
</dbReference>
<dbReference type="Pfam" id="PF24861">
    <property type="entry name" value="SUS_N"/>
    <property type="match status" value="1"/>
</dbReference>
<dbReference type="SUPFAM" id="SSF53756">
    <property type="entry name" value="UDP-Glycosyltransferase/glycogen phosphorylase"/>
    <property type="match status" value="1"/>
</dbReference>
<reference key="1">
    <citation type="journal article" date="1992" name="Plant Mol. Biol.">
        <title>A complete sequence of the rice sucrose synthase-1 (RSs1) gene.</title>
        <authorList>
            <person name="Wang M.-B."/>
            <person name="Boulter D."/>
            <person name="Gatehouse J.A."/>
        </authorList>
    </citation>
    <scope>NUCLEOTIDE SEQUENCE [GENOMIC DNA]</scope>
    <source>
        <strain>cv. Tainung 67</strain>
        <tissue>Seed</tissue>
    </source>
</reference>
<reference key="2">
    <citation type="journal article" date="1996" name="Biosci. Biotechnol. Biochem.">
        <title>Complete structures of three rice sucrose synthase isogenes and differential regulation of their expressions.</title>
        <authorList>
            <person name="Huang J.W."/>
            <person name="Chen J.T."/>
            <person name="Yu W.P."/>
            <person name="Shyur L.F."/>
            <person name="Wang A.Y."/>
            <person name="Sung H.Y."/>
            <person name="Lee P.D."/>
            <person name="Su J.C."/>
        </authorList>
    </citation>
    <scope>NUCLEOTIDE SEQUENCE [GENOMIC DNA]</scope>
    <source>
        <strain>cv. Tainung 67</strain>
        <tissue>Seed</tissue>
    </source>
</reference>
<reference key="3">
    <citation type="journal article" date="1996" name="Plant Sci.">
        <title>Isolation and sequence of a sucrose synthase cDNA from developing rice seeds.</title>
        <authorList>
            <person name="Odegard W."/>
            <person name="Liu J.J."/>
            <person name="de Lumen B.O."/>
        </authorList>
    </citation>
    <scope>NUCLEOTIDE SEQUENCE [MRNA]</scope>
    <source>
        <strain>cv. NATO</strain>
        <tissue>Seed</tissue>
    </source>
</reference>
<reference key="4">
    <citation type="submission" date="2006-11" db="EMBL/GenBank/DDBJ databases">
        <title>Molecular cloning of sucrose synthase 2 genes in rice seeds.</title>
        <authorList>
            <person name="Yoon U.H."/>
            <person name="Kim Y.H."/>
        </authorList>
    </citation>
    <scope>NUCLEOTIDE SEQUENCE [MRNA]</scope>
    <source>
        <strain>cv. Ilpoombyeo</strain>
        <tissue>Seed</tissue>
    </source>
</reference>
<reference key="5">
    <citation type="journal article" date="2011" name="Mol. Cells">
        <title>Identification and characterization of the duplicate rice sucrose synthase genes OsSUS5 and OsSUS7 which are associated with the plasma membrane.</title>
        <authorList>
            <person name="Cho J.I."/>
            <person name="Kim H.B."/>
            <person name="Kim C.Y."/>
            <person name="Hahn T.R."/>
            <person name="Jeon J.S."/>
        </authorList>
    </citation>
    <scope>NUCLEOTIDE SEQUENCE [MRNA]</scope>
    <scope>GENE FAMILY</scope>
    <scope>TISSUE SPECIFICITY</scope>
    <scope>DEVELOPMENTAL STAGE</scope>
    <source>
        <strain>cv. Nipponbare</strain>
    </source>
</reference>
<reference key="6">
    <citation type="journal article" date="2005" name="Nature">
        <title>The map-based sequence of the rice genome.</title>
        <authorList>
            <consortium name="International rice genome sequencing project (IRGSP)"/>
        </authorList>
    </citation>
    <scope>NUCLEOTIDE SEQUENCE [LARGE SCALE GENOMIC DNA]</scope>
    <source>
        <strain>cv. Nipponbare</strain>
    </source>
</reference>
<reference key="7">
    <citation type="journal article" date="2008" name="Nucleic Acids Res.">
        <title>The rice annotation project database (RAP-DB): 2008 update.</title>
        <authorList>
            <consortium name="The rice annotation project (RAP)"/>
        </authorList>
    </citation>
    <scope>GENOME REANNOTATION</scope>
    <source>
        <strain>cv. Nipponbare</strain>
    </source>
</reference>
<reference key="8">
    <citation type="journal article" date="2013" name="Rice">
        <title>Improvement of the Oryza sativa Nipponbare reference genome using next generation sequence and optical map data.</title>
        <authorList>
            <person name="Kawahara Y."/>
            <person name="de la Bastide M."/>
            <person name="Hamilton J.P."/>
            <person name="Kanamori H."/>
            <person name="McCombie W.R."/>
            <person name="Ouyang S."/>
            <person name="Schwartz D.C."/>
            <person name="Tanaka T."/>
            <person name="Wu J."/>
            <person name="Zhou S."/>
            <person name="Childs K.L."/>
            <person name="Davidson R.M."/>
            <person name="Lin H."/>
            <person name="Quesada-Ocampo L."/>
            <person name="Vaillancourt B."/>
            <person name="Sakai H."/>
            <person name="Lee S.S."/>
            <person name="Kim J."/>
            <person name="Numa H."/>
            <person name="Itoh T."/>
            <person name="Buell C.R."/>
            <person name="Matsumoto T."/>
        </authorList>
    </citation>
    <scope>GENOME REANNOTATION</scope>
    <source>
        <strain>cv. Nipponbare</strain>
    </source>
</reference>
<reference key="9">
    <citation type="journal article" date="2003" name="Science">
        <title>Collection, mapping, and annotation of over 28,000 cDNA clones from japonica rice.</title>
        <authorList>
            <consortium name="The rice full-length cDNA consortium"/>
        </authorList>
    </citation>
    <scope>NUCLEOTIDE SEQUENCE [LARGE SCALE MRNA]</scope>
    <source>
        <strain>cv. Nipponbare</strain>
    </source>
</reference>
<reference key="10">
    <citation type="journal article" date="1998" name="Biochem. Mol. Biol. Int.">
        <title>Purification and characterization of sucrose synthase isozymes from etiolated rice seedlings.</title>
        <authorList>
            <person name="Huang D.Y."/>
            <person name="Wang A.-Y."/>
        </authorList>
    </citation>
    <scope>SUBUNIT</scope>
</reference>
<reference key="11">
    <citation type="journal article" date="1999" name="Plant Cell Physiol.">
        <title>Differentially and developmentally regulated expression of three rice sucrose synthase genes.</title>
        <authorList>
            <person name="Wang A.-Y."/>
            <person name="Kao M.-H."/>
            <person name="Yang W.-H."/>
            <person name="Sayion Y."/>
            <person name="Liu L.-F."/>
            <person name="Lee P.-D."/>
            <person name="Su J.-C."/>
        </authorList>
    </citation>
    <scope>TISSUE SPECIFICITY</scope>
    <scope>DEVELOPMENTAL STAGE</scope>
</reference>
<reference key="12">
    <citation type="journal article" date="2002" name="Plant Cell">
        <title>Rice SPK, a calmodulin-like domain protein kinase, is required for storage product accumulation during seed development: phosphorylation of sucrose synthase is a possible factor.</title>
        <authorList>
            <person name="Asano T."/>
            <person name="Kunieda N."/>
            <person name="Omura Y."/>
            <person name="Ibe H."/>
            <person name="Kawasaki T."/>
            <person name="Takano M."/>
            <person name="Sato M."/>
            <person name="Furuhashi H."/>
            <person name="Mujin T."/>
            <person name="Takaiwa F."/>
            <person name="Wu Cy C.Y."/>
            <person name="Tada Y."/>
            <person name="Satozawa T."/>
            <person name="Sakamoto M."/>
            <person name="Shimada H."/>
        </authorList>
    </citation>
    <scope>FUNCTION</scope>
    <scope>ACTIVITY REGULATION</scope>
    <scope>PHOSPHORYLATION AT SER-10</scope>
    <scope>MUTAGENESIS OF SER-10</scope>
</reference>
<reference key="13">
    <citation type="journal article" date="2003" name="Physiol. Plantarum">
        <title>Sugar-modulated gene expression of sucrose synthase in suspension-cultured cells of rice.</title>
        <authorList>
            <person name="Liao Y.-C."/>
            <person name="Wang A.-Y."/>
        </authorList>
    </citation>
    <scope>INDUCTION BY SUGARS</scope>
</reference>
<reference key="14">
    <citation type="journal article" date="2005" name="Plant Cell Physiol.">
        <title>Expression patterns of genes encoding carbohydrate-metabolizing enzymes and their relationship to grain filling in rice (Oryza sativa L.): comparison of caryopses located at different positions in a panicle.</title>
        <authorList>
            <person name="Ishimaru T."/>
            <person name="Hirose T."/>
            <person name="Matsuda T."/>
            <person name="Goto A."/>
            <person name="Takahashi K."/>
            <person name="Sasaki H."/>
            <person name="Terao T."/>
            <person name="Ishii R."/>
            <person name="Ohsugi R."/>
            <person name="Yamagishi T."/>
        </authorList>
    </citation>
    <scope>DEVELOPMENTAL STAGE</scope>
</reference>
<reference key="15">
    <citation type="journal article" date="2008" name="Plant Sci.">
        <title>An expression analysis profile for the entire sucrose synthase gene family in rice.</title>
        <authorList>
            <person name="Hirose T."/>
            <person name="Scofield G.N."/>
            <person name="Terao T."/>
        </authorList>
    </citation>
    <scope>GENE FAMILY</scope>
    <scope>INDUCTION BY SUBMERGENCE</scope>
</reference>
<organism>
    <name type="scientific">Oryza sativa subsp. japonica</name>
    <name type="common">Rice</name>
    <dbReference type="NCBI Taxonomy" id="39947"/>
    <lineage>
        <taxon>Eukaryota</taxon>
        <taxon>Viridiplantae</taxon>
        <taxon>Streptophyta</taxon>
        <taxon>Embryophyta</taxon>
        <taxon>Tracheophyta</taxon>
        <taxon>Spermatophyta</taxon>
        <taxon>Magnoliopsida</taxon>
        <taxon>Liliopsida</taxon>
        <taxon>Poales</taxon>
        <taxon>Poaceae</taxon>
        <taxon>BOP clade</taxon>
        <taxon>Oryzoideae</taxon>
        <taxon>Oryzeae</taxon>
        <taxon>Oryzinae</taxon>
        <taxon>Oryza</taxon>
        <taxon>Oryza sativa</taxon>
    </lineage>
</organism>